<protein>
    <recommendedName>
        <fullName evidence="1">3-dehydroquinate synthase</fullName>
        <shortName evidence="1">DHQS</shortName>
        <ecNumber evidence="1">4.2.3.4</ecNumber>
    </recommendedName>
</protein>
<accession>Q7NA56</accession>
<reference key="1">
    <citation type="journal article" date="2003" name="Nat. Biotechnol.">
        <title>The genome sequence of the entomopathogenic bacterium Photorhabdus luminescens.</title>
        <authorList>
            <person name="Duchaud E."/>
            <person name="Rusniok C."/>
            <person name="Frangeul L."/>
            <person name="Buchrieser C."/>
            <person name="Givaudan A."/>
            <person name="Taourit S."/>
            <person name="Bocs S."/>
            <person name="Boursaux-Eude C."/>
            <person name="Chandler M."/>
            <person name="Charles J.-F."/>
            <person name="Dassa E."/>
            <person name="Derose R."/>
            <person name="Derzelle S."/>
            <person name="Freyssinet G."/>
            <person name="Gaudriault S."/>
            <person name="Medigue C."/>
            <person name="Lanois A."/>
            <person name="Powell K."/>
            <person name="Siguier P."/>
            <person name="Vincent R."/>
            <person name="Wingate V."/>
            <person name="Zouine M."/>
            <person name="Glaser P."/>
            <person name="Boemare N."/>
            <person name="Danchin A."/>
            <person name="Kunst F."/>
        </authorList>
    </citation>
    <scope>NUCLEOTIDE SEQUENCE [LARGE SCALE GENOMIC DNA]</scope>
    <source>
        <strain>DSM 15139 / CIP 105565 / TT01</strain>
    </source>
</reference>
<organism>
    <name type="scientific">Photorhabdus laumondii subsp. laumondii (strain DSM 15139 / CIP 105565 / TT01)</name>
    <name type="common">Photorhabdus luminescens subsp. laumondii</name>
    <dbReference type="NCBI Taxonomy" id="243265"/>
    <lineage>
        <taxon>Bacteria</taxon>
        <taxon>Pseudomonadati</taxon>
        <taxon>Pseudomonadota</taxon>
        <taxon>Gammaproteobacteria</taxon>
        <taxon>Enterobacterales</taxon>
        <taxon>Morganellaceae</taxon>
        <taxon>Photorhabdus</taxon>
    </lineage>
</organism>
<feature type="chain" id="PRO_0000140764" description="3-dehydroquinate synthase">
    <location>
        <begin position="1"/>
        <end position="366"/>
    </location>
</feature>
<feature type="binding site" evidence="1">
    <location>
        <begin position="71"/>
        <end position="76"/>
    </location>
    <ligand>
        <name>NAD(+)</name>
        <dbReference type="ChEBI" id="CHEBI:57540"/>
    </ligand>
</feature>
<feature type="binding site" evidence="1">
    <location>
        <begin position="105"/>
        <end position="109"/>
    </location>
    <ligand>
        <name>NAD(+)</name>
        <dbReference type="ChEBI" id="CHEBI:57540"/>
    </ligand>
</feature>
<feature type="binding site" evidence="1">
    <location>
        <begin position="129"/>
        <end position="130"/>
    </location>
    <ligand>
        <name>NAD(+)</name>
        <dbReference type="ChEBI" id="CHEBI:57540"/>
    </ligand>
</feature>
<feature type="binding site" evidence="1">
    <location>
        <position position="142"/>
    </location>
    <ligand>
        <name>NAD(+)</name>
        <dbReference type="ChEBI" id="CHEBI:57540"/>
    </ligand>
</feature>
<feature type="binding site" evidence="1">
    <location>
        <position position="151"/>
    </location>
    <ligand>
        <name>NAD(+)</name>
        <dbReference type="ChEBI" id="CHEBI:57540"/>
    </ligand>
</feature>
<feature type="binding site" evidence="1">
    <location>
        <begin position="169"/>
        <end position="172"/>
    </location>
    <ligand>
        <name>NAD(+)</name>
        <dbReference type="ChEBI" id="CHEBI:57540"/>
    </ligand>
</feature>
<feature type="binding site" evidence="1">
    <location>
        <position position="184"/>
    </location>
    <ligand>
        <name>Zn(2+)</name>
        <dbReference type="ChEBI" id="CHEBI:29105"/>
    </ligand>
</feature>
<feature type="binding site" evidence="1">
    <location>
        <position position="248"/>
    </location>
    <ligand>
        <name>Zn(2+)</name>
        <dbReference type="ChEBI" id="CHEBI:29105"/>
    </ligand>
</feature>
<feature type="binding site" evidence="1">
    <location>
        <position position="265"/>
    </location>
    <ligand>
        <name>Zn(2+)</name>
        <dbReference type="ChEBI" id="CHEBI:29105"/>
    </ligand>
</feature>
<comment type="function">
    <text evidence="1">Catalyzes the conversion of 3-deoxy-D-arabino-heptulosonate 7-phosphate (DAHP) to dehydroquinate (DHQ).</text>
</comment>
<comment type="catalytic activity">
    <reaction evidence="1">
        <text>7-phospho-2-dehydro-3-deoxy-D-arabino-heptonate = 3-dehydroquinate + phosphate</text>
        <dbReference type="Rhea" id="RHEA:21968"/>
        <dbReference type="ChEBI" id="CHEBI:32364"/>
        <dbReference type="ChEBI" id="CHEBI:43474"/>
        <dbReference type="ChEBI" id="CHEBI:58394"/>
        <dbReference type="EC" id="4.2.3.4"/>
    </reaction>
</comment>
<comment type="cofactor">
    <cofactor evidence="1">
        <name>NAD(+)</name>
        <dbReference type="ChEBI" id="CHEBI:57540"/>
    </cofactor>
</comment>
<comment type="cofactor">
    <cofactor evidence="1">
        <name>Co(2+)</name>
        <dbReference type="ChEBI" id="CHEBI:48828"/>
    </cofactor>
    <cofactor evidence="1">
        <name>Zn(2+)</name>
        <dbReference type="ChEBI" id="CHEBI:29105"/>
    </cofactor>
    <text evidence="1">Binds 1 divalent metal cation per subunit. Can use either Co(2+) or Zn(2+).</text>
</comment>
<comment type="pathway">
    <text evidence="1">Metabolic intermediate biosynthesis; chorismate biosynthesis; chorismate from D-erythrose 4-phosphate and phosphoenolpyruvate: step 2/7.</text>
</comment>
<comment type="subcellular location">
    <subcellularLocation>
        <location evidence="1">Cytoplasm</location>
    </subcellularLocation>
</comment>
<comment type="similarity">
    <text evidence="1">Belongs to the sugar phosphate cyclases superfamily. Dehydroquinate synthase family.</text>
</comment>
<evidence type="ECO:0000255" key="1">
    <source>
        <dbReference type="HAMAP-Rule" id="MF_00110"/>
    </source>
</evidence>
<gene>
    <name evidence="1" type="primary">aroB</name>
    <name type="ordered locus">plu0089</name>
</gene>
<dbReference type="EC" id="4.2.3.4" evidence="1"/>
<dbReference type="EMBL" id="BX571859">
    <property type="protein sequence ID" value="CAE12384.1"/>
    <property type="molecule type" value="Genomic_DNA"/>
</dbReference>
<dbReference type="RefSeq" id="WP_011144495.1">
    <property type="nucleotide sequence ID" value="NC_005126.1"/>
</dbReference>
<dbReference type="SMR" id="Q7NA56"/>
<dbReference type="STRING" id="243265.plu0089"/>
<dbReference type="GeneID" id="48846390"/>
<dbReference type="KEGG" id="plu:plu0089"/>
<dbReference type="eggNOG" id="COG0337">
    <property type="taxonomic scope" value="Bacteria"/>
</dbReference>
<dbReference type="HOGENOM" id="CLU_001201_0_2_6"/>
<dbReference type="OrthoDB" id="9806583at2"/>
<dbReference type="UniPathway" id="UPA00053">
    <property type="reaction ID" value="UER00085"/>
</dbReference>
<dbReference type="Proteomes" id="UP000002514">
    <property type="component" value="Chromosome"/>
</dbReference>
<dbReference type="GO" id="GO:0005737">
    <property type="term" value="C:cytoplasm"/>
    <property type="evidence" value="ECO:0007669"/>
    <property type="project" value="UniProtKB-SubCell"/>
</dbReference>
<dbReference type="GO" id="GO:0003856">
    <property type="term" value="F:3-dehydroquinate synthase activity"/>
    <property type="evidence" value="ECO:0007669"/>
    <property type="project" value="UniProtKB-UniRule"/>
</dbReference>
<dbReference type="GO" id="GO:0046872">
    <property type="term" value="F:metal ion binding"/>
    <property type="evidence" value="ECO:0007669"/>
    <property type="project" value="UniProtKB-KW"/>
</dbReference>
<dbReference type="GO" id="GO:0000166">
    <property type="term" value="F:nucleotide binding"/>
    <property type="evidence" value="ECO:0007669"/>
    <property type="project" value="UniProtKB-KW"/>
</dbReference>
<dbReference type="GO" id="GO:0008652">
    <property type="term" value="P:amino acid biosynthetic process"/>
    <property type="evidence" value="ECO:0007669"/>
    <property type="project" value="UniProtKB-KW"/>
</dbReference>
<dbReference type="GO" id="GO:0009073">
    <property type="term" value="P:aromatic amino acid family biosynthetic process"/>
    <property type="evidence" value="ECO:0007669"/>
    <property type="project" value="UniProtKB-KW"/>
</dbReference>
<dbReference type="GO" id="GO:0009423">
    <property type="term" value="P:chorismate biosynthetic process"/>
    <property type="evidence" value="ECO:0007669"/>
    <property type="project" value="UniProtKB-UniRule"/>
</dbReference>
<dbReference type="CDD" id="cd08195">
    <property type="entry name" value="DHQS"/>
    <property type="match status" value="1"/>
</dbReference>
<dbReference type="FunFam" id="1.20.1090.10:FF:000002">
    <property type="entry name" value="3-dehydroquinate synthase"/>
    <property type="match status" value="1"/>
</dbReference>
<dbReference type="FunFam" id="3.40.50.1970:FF:000001">
    <property type="entry name" value="3-dehydroquinate synthase"/>
    <property type="match status" value="1"/>
</dbReference>
<dbReference type="Gene3D" id="3.40.50.1970">
    <property type="match status" value="1"/>
</dbReference>
<dbReference type="Gene3D" id="1.20.1090.10">
    <property type="entry name" value="Dehydroquinate synthase-like - alpha domain"/>
    <property type="match status" value="1"/>
</dbReference>
<dbReference type="HAMAP" id="MF_00110">
    <property type="entry name" value="DHQ_synthase"/>
    <property type="match status" value="1"/>
</dbReference>
<dbReference type="InterPro" id="IPR050071">
    <property type="entry name" value="Dehydroquinate_synthase"/>
</dbReference>
<dbReference type="InterPro" id="IPR016037">
    <property type="entry name" value="DHQ_synth_AroB"/>
</dbReference>
<dbReference type="InterPro" id="IPR030963">
    <property type="entry name" value="DHQ_synth_fam"/>
</dbReference>
<dbReference type="InterPro" id="IPR030960">
    <property type="entry name" value="DHQS/DOIS_N"/>
</dbReference>
<dbReference type="InterPro" id="IPR056179">
    <property type="entry name" value="DHQS_C"/>
</dbReference>
<dbReference type="NCBIfam" id="TIGR01357">
    <property type="entry name" value="aroB"/>
    <property type="match status" value="1"/>
</dbReference>
<dbReference type="PANTHER" id="PTHR43622">
    <property type="entry name" value="3-DEHYDROQUINATE SYNTHASE"/>
    <property type="match status" value="1"/>
</dbReference>
<dbReference type="PANTHER" id="PTHR43622:SF7">
    <property type="entry name" value="3-DEHYDROQUINATE SYNTHASE, CHLOROPLASTIC"/>
    <property type="match status" value="1"/>
</dbReference>
<dbReference type="Pfam" id="PF01761">
    <property type="entry name" value="DHQ_synthase"/>
    <property type="match status" value="1"/>
</dbReference>
<dbReference type="Pfam" id="PF24621">
    <property type="entry name" value="DHQS_C"/>
    <property type="match status" value="1"/>
</dbReference>
<dbReference type="PIRSF" id="PIRSF001455">
    <property type="entry name" value="DHQ_synth"/>
    <property type="match status" value="1"/>
</dbReference>
<dbReference type="SUPFAM" id="SSF56796">
    <property type="entry name" value="Dehydroquinate synthase-like"/>
    <property type="match status" value="1"/>
</dbReference>
<name>AROB_PHOLL</name>
<sequence length="366" mass="40017">MEKITVTLGERSYPITIAKGLFDDPSAFAPLKAGQQVMLVTNQTLAPLYLAKVKATLQQARIRVDEVILPDGEQYKSLSVLNDVFSALLENSHSRDTTLIALGGGVIGDLTGFAAACYQRGVRFIQMPTTLLAQVDSSVGGKTAVNHPFGKNMIGAFYQPASVMVDLNCLQTLPARELSSGLAEVIKYGIILDSAFFSWLEDNMDKLLALDNQAMAHCIRRCCELKAEVVAADEKELSGLRALLNLGHTFGHAIETEMGYGVWLHGEAVSAGMVMAARTAQLIDNFSEQDTQRIIRLLERANLPVHGPQNMPPEAYLPHMMRDKKVIAGKLRLVLPTKIGKADLRSDIEHNCVVDAILQCLPYENV</sequence>
<keyword id="KW-0028">Amino-acid biosynthesis</keyword>
<keyword id="KW-0057">Aromatic amino acid biosynthesis</keyword>
<keyword id="KW-0170">Cobalt</keyword>
<keyword id="KW-0963">Cytoplasm</keyword>
<keyword id="KW-0456">Lyase</keyword>
<keyword id="KW-0479">Metal-binding</keyword>
<keyword id="KW-0520">NAD</keyword>
<keyword id="KW-0547">Nucleotide-binding</keyword>
<keyword id="KW-1185">Reference proteome</keyword>
<keyword id="KW-0862">Zinc</keyword>
<proteinExistence type="inferred from homology"/>